<keyword id="KW-0067">ATP-binding</keyword>
<keyword id="KW-0315">Glutamine amidotransferase</keyword>
<keyword id="KW-0436">Ligase</keyword>
<keyword id="KW-0460">Magnesium</keyword>
<keyword id="KW-0479">Metal-binding</keyword>
<keyword id="KW-0547">Nucleotide-binding</keyword>
<keyword id="KW-0665">Pyrimidine biosynthesis</keyword>
<keyword id="KW-1185">Reference proteome</keyword>
<sequence length="531" mass="59725">MTKYIFVTGGVVSSLGKGITAASLGRLLKNRGLNVTIQKFDPYINVDPGTMSPYQHGEVFVTDDGAETDLDLGHYERFIDINLNKYSNVTTGKIYSAVIRKERRGDYLGGTVQVIPHITNEIKERVFRAGRETNADVVITEIGGTVGDIESLPFLEAIRQIKSDVGRENVMYIHCTLVPYIKAAGEMKTKPTQHSVKELRSLGIQPNVIVVRTEMPMPQEMKEKIALFCDIDPKAVIEARDADTLYAVPLMLQEQKLDQIVCEHLRLNCREADMTEWKALVEKVRNLSKTTKIALVGKYVELPDAYISVVEALRHAGYAFDTDIDIQWINAEHVTRDNVADLLKDADGILVPGGFGDRGVEGKIEAIRYAREQRVPFLGICLGMQLASIEFARHVVGLSGAHSSEFDPNTPHPIIDLLPEQKDVEDLGGTLRLGLYPCKLQEGTLAYAAYGDEVIYERHRHRYEFNNQYRPIMEEHGFVFSGTSPDGRLVEVIELKDHPWFVAAQFHPEFTSRPTRPQPLFREFVRASLKE</sequence>
<reference key="1">
    <citation type="journal article" date="2004" name="Nucleic Acids Res.">
        <title>Thermoadaptation trait revealed by the genome sequence of thermophilic Geobacillus kaustophilus.</title>
        <authorList>
            <person name="Takami H."/>
            <person name="Takaki Y."/>
            <person name="Chee G.-J."/>
            <person name="Nishi S."/>
            <person name="Shimamura S."/>
            <person name="Suzuki H."/>
            <person name="Matsui S."/>
            <person name="Uchiyama I."/>
        </authorList>
    </citation>
    <scope>NUCLEOTIDE SEQUENCE [LARGE SCALE GENOMIC DNA]</scope>
    <source>
        <strain>HTA426</strain>
    </source>
</reference>
<accession>Q5KUG2</accession>
<name>PYRG_GEOKA</name>
<feature type="chain" id="PRO_0000266124" description="CTP synthase">
    <location>
        <begin position="1"/>
        <end position="531"/>
    </location>
</feature>
<feature type="domain" description="Glutamine amidotransferase type-1" evidence="1">
    <location>
        <begin position="292"/>
        <end position="531"/>
    </location>
</feature>
<feature type="region of interest" description="Amidoligase domain" evidence="1">
    <location>
        <begin position="1"/>
        <end position="267"/>
    </location>
</feature>
<feature type="active site" description="Nucleophile; for glutamine hydrolysis" evidence="1">
    <location>
        <position position="381"/>
    </location>
</feature>
<feature type="active site" evidence="1">
    <location>
        <position position="507"/>
    </location>
</feature>
<feature type="active site" evidence="1">
    <location>
        <position position="509"/>
    </location>
</feature>
<feature type="binding site" evidence="1">
    <location>
        <position position="13"/>
    </location>
    <ligand>
        <name>CTP</name>
        <dbReference type="ChEBI" id="CHEBI:37563"/>
        <note>allosteric inhibitor</note>
    </ligand>
</feature>
<feature type="binding site" evidence="1">
    <location>
        <position position="13"/>
    </location>
    <ligand>
        <name>UTP</name>
        <dbReference type="ChEBI" id="CHEBI:46398"/>
    </ligand>
</feature>
<feature type="binding site" evidence="1">
    <location>
        <begin position="14"/>
        <end position="19"/>
    </location>
    <ligand>
        <name>ATP</name>
        <dbReference type="ChEBI" id="CHEBI:30616"/>
    </ligand>
</feature>
<feature type="binding site" evidence="1">
    <location>
        <position position="54"/>
    </location>
    <ligand>
        <name>L-glutamine</name>
        <dbReference type="ChEBI" id="CHEBI:58359"/>
    </ligand>
</feature>
<feature type="binding site" evidence="1">
    <location>
        <position position="71"/>
    </location>
    <ligand>
        <name>ATP</name>
        <dbReference type="ChEBI" id="CHEBI:30616"/>
    </ligand>
</feature>
<feature type="binding site" evidence="1">
    <location>
        <position position="71"/>
    </location>
    <ligand>
        <name>Mg(2+)</name>
        <dbReference type="ChEBI" id="CHEBI:18420"/>
    </ligand>
</feature>
<feature type="binding site" evidence="1">
    <location>
        <position position="141"/>
    </location>
    <ligand>
        <name>Mg(2+)</name>
        <dbReference type="ChEBI" id="CHEBI:18420"/>
    </ligand>
</feature>
<feature type="binding site" evidence="1">
    <location>
        <begin position="148"/>
        <end position="150"/>
    </location>
    <ligand>
        <name>CTP</name>
        <dbReference type="ChEBI" id="CHEBI:37563"/>
        <note>allosteric inhibitor</note>
    </ligand>
</feature>
<feature type="binding site" evidence="1">
    <location>
        <begin position="188"/>
        <end position="193"/>
    </location>
    <ligand>
        <name>CTP</name>
        <dbReference type="ChEBI" id="CHEBI:37563"/>
        <note>allosteric inhibitor</note>
    </ligand>
</feature>
<feature type="binding site" evidence="1">
    <location>
        <begin position="188"/>
        <end position="193"/>
    </location>
    <ligand>
        <name>UTP</name>
        <dbReference type="ChEBI" id="CHEBI:46398"/>
    </ligand>
</feature>
<feature type="binding site" evidence="1">
    <location>
        <position position="224"/>
    </location>
    <ligand>
        <name>CTP</name>
        <dbReference type="ChEBI" id="CHEBI:37563"/>
        <note>allosteric inhibitor</note>
    </ligand>
</feature>
<feature type="binding site" evidence="1">
    <location>
        <position position="224"/>
    </location>
    <ligand>
        <name>UTP</name>
        <dbReference type="ChEBI" id="CHEBI:46398"/>
    </ligand>
</feature>
<feature type="binding site" evidence="1">
    <location>
        <begin position="240"/>
        <end position="242"/>
    </location>
    <ligand>
        <name>ATP</name>
        <dbReference type="ChEBI" id="CHEBI:30616"/>
    </ligand>
</feature>
<feature type="binding site" evidence="1">
    <location>
        <position position="354"/>
    </location>
    <ligand>
        <name>L-glutamine</name>
        <dbReference type="ChEBI" id="CHEBI:58359"/>
    </ligand>
</feature>
<feature type="binding site" evidence="1">
    <location>
        <begin position="382"/>
        <end position="385"/>
    </location>
    <ligand>
        <name>L-glutamine</name>
        <dbReference type="ChEBI" id="CHEBI:58359"/>
    </ligand>
</feature>
<feature type="binding site" evidence="1">
    <location>
        <position position="405"/>
    </location>
    <ligand>
        <name>L-glutamine</name>
        <dbReference type="ChEBI" id="CHEBI:58359"/>
    </ligand>
</feature>
<feature type="binding site" evidence="1">
    <location>
        <position position="462"/>
    </location>
    <ligand>
        <name>L-glutamine</name>
        <dbReference type="ChEBI" id="CHEBI:58359"/>
    </ligand>
</feature>
<protein>
    <recommendedName>
        <fullName evidence="1">CTP synthase</fullName>
        <ecNumber evidence="1">6.3.4.2</ecNumber>
    </recommendedName>
    <alternativeName>
        <fullName evidence="1">Cytidine 5'-triphosphate synthase</fullName>
    </alternativeName>
    <alternativeName>
        <fullName evidence="1">Cytidine triphosphate synthetase</fullName>
        <shortName evidence="1">CTP synthetase</shortName>
        <shortName evidence="1">CTPS</shortName>
    </alternativeName>
    <alternativeName>
        <fullName evidence="1">UTP--ammonia ligase</fullName>
    </alternativeName>
</protein>
<comment type="function">
    <text evidence="1">Catalyzes the ATP-dependent amination of UTP to CTP with either L-glutamine or ammonia as the source of nitrogen. Regulates intracellular CTP levels through interactions with the four ribonucleotide triphosphates.</text>
</comment>
<comment type="catalytic activity">
    <reaction evidence="1">
        <text>UTP + L-glutamine + ATP + H2O = CTP + L-glutamate + ADP + phosphate + 2 H(+)</text>
        <dbReference type="Rhea" id="RHEA:26426"/>
        <dbReference type="ChEBI" id="CHEBI:15377"/>
        <dbReference type="ChEBI" id="CHEBI:15378"/>
        <dbReference type="ChEBI" id="CHEBI:29985"/>
        <dbReference type="ChEBI" id="CHEBI:30616"/>
        <dbReference type="ChEBI" id="CHEBI:37563"/>
        <dbReference type="ChEBI" id="CHEBI:43474"/>
        <dbReference type="ChEBI" id="CHEBI:46398"/>
        <dbReference type="ChEBI" id="CHEBI:58359"/>
        <dbReference type="ChEBI" id="CHEBI:456216"/>
        <dbReference type="EC" id="6.3.4.2"/>
    </reaction>
</comment>
<comment type="catalytic activity">
    <reaction evidence="1">
        <text>L-glutamine + H2O = L-glutamate + NH4(+)</text>
        <dbReference type="Rhea" id="RHEA:15889"/>
        <dbReference type="ChEBI" id="CHEBI:15377"/>
        <dbReference type="ChEBI" id="CHEBI:28938"/>
        <dbReference type="ChEBI" id="CHEBI:29985"/>
        <dbReference type="ChEBI" id="CHEBI:58359"/>
    </reaction>
</comment>
<comment type="catalytic activity">
    <reaction evidence="1">
        <text>UTP + NH4(+) + ATP = CTP + ADP + phosphate + 2 H(+)</text>
        <dbReference type="Rhea" id="RHEA:16597"/>
        <dbReference type="ChEBI" id="CHEBI:15378"/>
        <dbReference type="ChEBI" id="CHEBI:28938"/>
        <dbReference type="ChEBI" id="CHEBI:30616"/>
        <dbReference type="ChEBI" id="CHEBI:37563"/>
        <dbReference type="ChEBI" id="CHEBI:43474"/>
        <dbReference type="ChEBI" id="CHEBI:46398"/>
        <dbReference type="ChEBI" id="CHEBI:456216"/>
    </reaction>
</comment>
<comment type="activity regulation">
    <text evidence="1">Allosterically activated by GTP, when glutamine is the substrate; GTP has no effect on the reaction when ammonia is the substrate. The allosteric effector GTP functions by stabilizing the protein conformation that binds the tetrahedral intermediate(s) formed during glutamine hydrolysis. Inhibited by the product CTP, via allosteric rather than competitive inhibition.</text>
</comment>
<comment type="pathway">
    <text evidence="1">Pyrimidine metabolism; CTP biosynthesis via de novo pathway; CTP from UDP: step 2/2.</text>
</comment>
<comment type="subunit">
    <text evidence="1">Homotetramer.</text>
</comment>
<comment type="miscellaneous">
    <text evidence="1">CTPSs have evolved a hybrid strategy for distinguishing between UTP and CTP. The overlapping regions of the product feedback inhibitory and substrate sites recognize a common feature in both compounds, the triphosphate moiety. To differentiate isosteric substrate and product pyrimidine rings, an additional pocket far from the expected kinase/ligase catalytic site, specifically recognizes the cytosine and ribose portions of the product inhibitor.</text>
</comment>
<comment type="similarity">
    <text evidence="1">Belongs to the CTP synthase family.</text>
</comment>
<evidence type="ECO:0000255" key="1">
    <source>
        <dbReference type="HAMAP-Rule" id="MF_01227"/>
    </source>
</evidence>
<dbReference type="EC" id="6.3.4.2" evidence="1"/>
<dbReference type="EMBL" id="BA000043">
    <property type="protein sequence ID" value="BAD77674.1"/>
    <property type="molecule type" value="Genomic_DNA"/>
</dbReference>
<dbReference type="RefSeq" id="WP_011232856.1">
    <property type="nucleotide sequence ID" value="NC_006510.1"/>
</dbReference>
<dbReference type="SMR" id="Q5KUG2"/>
<dbReference type="STRING" id="235909.GK3389"/>
<dbReference type="KEGG" id="gka:GK3389"/>
<dbReference type="eggNOG" id="COG0504">
    <property type="taxonomic scope" value="Bacteria"/>
</dbReference>
<dbReference type="HOGENOM" id="CLU_011675_5_0_9"/>
<dbReference type="UniPathway" id="UPA00159">
    <property type="reaction ID" value="UER00277"/>
</dbReference>
<dbReference type="Proteomes" id="UP000001172">
    <property type="component" value="Chromosome"/>
</dbReference>
<dbReference type="GO" id="GO:0005829">
    <property type="term" value="C:cytosol"/>
    <property type="evidence" value="ECO:0007669"/>
    <property type="project" value="TreeGrafter"/>
</dbReference>
<dbReference type="GO" id="GO:0005524">
    <property type="term" value="F:ATP binding"/>
    <property type="evidence" value="ECO:0007669"/>
    <property type="project" value="UniProtKB-KW"/>
</dbReference>
<dbReference type="GO" id="GO:0003883">
    <property type="term" value="F:CTP synthase activity"/>
    <property type="evidence" value="ECO:0007669"/>
    <property type="project" value="UniProtKB-UniRule"/>
</dbReference>
<dbReference type="GO" id="GO:0004359">
    <property type="term" value="F:glutaminase activity"/>
    <property type="evidence" value="ECO:0007669"/>
    <property type="project" value="RHEA"/>
</dbReference>
<dbReference type="GO" id="GO:0042802">
    <property type="term" value="F:identical protein binding"/>
    <property type="evidence" value="ECO:0007669"/>
    <property type="project" value="TreeGrafter"/>
</dbReference>
<dbReference type="GO" id="GO:0046872">
    <property type="term" value="F:metal ion binding"/>
    <property type="evidence" value="ECO:0007669"/>
    <property type="project" value="UniProtKB-KW"/>
</dbReference>
<dbReference type="GO" id="GO:0044210">
    <property type="term" value="P:'de novo' CTP biosynthetic process"/>
    <property type="evidence" value="ECO:0007669"/>
    <property type="project" value="UniProtKB-UniRule"/>
</dbReference>
<dbReference type="GO" id="GO:0019856">
    <property type="term" value="P:pyrimidine nucleobase biosynthetic process"/>
    <property type="evidence" value="ECO:0007669"/>
    <property type="project" value="TreeGrafter"/>
</dbReference>
<dbReference type="CDD" id="cd03113">
    <property type="entry name" value="CTPS_N"/>
    <property type="match status" value="1"/>
</dbReference>
<dbReference type="CDD" id="cd01746">
    <property type="entry name" value="GATase1_CTP_Synthase"/>
    <property type="match status" value="1"/>
</dbReference>
<dbReference type="FunFam" id="3.40.50.300:FF:000009">
    <property type="entry name" value="CTP synthase"/>
    <property type="match status" value="1"/>
</dbReference>
<dbReference type="FunFam" id="3.40.50.880:FF:000002">
    <property type="entry name" value="CTP synthase"/>
    <property type="match status" value="1"/>
</dbReference>
<dbReference type="Gene3D" id="3.40.50.880">
    <property type="match status" value="1"/>
</dbReference>
<dbReference type="Gene3D" id="3.40.50.300">
    <property type="entry name" value="P-loop containing nucleotide triphosphate hydrolases"/>
    <property type="match status" value="1"/>
</dbReference>
<dbReference type="HAMAP" id="MF_01227">
    <property type="entry name" value="PyrG"/>
    <property type="match status" value="1"/>
</dbReference>
<dbReference type="InterPro" id="IPR029062">
    <property type="entry name" value="Class_I_gatase-like"/>
</dbReference>
<dbReference type="InterPro" id="IPR004468">
    <property type="entry name" value="CTP_synthase"/>
</dbReference>
<dbReference type="InterPro" id="IPR017456">
    <property type="entry name" value="CTP_synthase_N"/>
</dbReference>
<dbReference type="InterPro" id="IPR017926">
    <property type="entry name" value="GATASE"/>
</dbReference>
<dbReference type="InterPro" id="IPR033828">
    <property type="entry name" value="GATase1_CTP_Synthase"/>
</dbReference>
<dbReference type="InterPro" id="IPR027417">
    <property type="entry name" value="P-loop_NTPase"/>
</dbReference>
<dbReference type="NCBIfam" id="NF003792">
    <property type="entry name" value="PRK05380.1"/>
    <property type="match status" value="1"/>
</dbReference>
<dbReference type="NCBIfam" id="TIGR00337">
    <property type="entry name" value="PyrG"/>
    <property type="match status" value="1"/>
</dbReference>
<dbReference type="PANTHER" id="PTHR11550">
    <property type="entry name" value="CTP SYNTHASE"/>
    <property type="match status" value="1"/>
</dbReference>
<dbReference type="PANTHER" id="PTHR11550:SF0">
    <property type="entry name" value="CTP SYNTHASE-RELATED"/>
    <property type="match status" value="1"/>
</dbReference>
<dbReference type="Pfam" id="PF06418">
    <property type="entry name" value="CTP_synth_N"/>
    <property type="match status" value="1"/>
</dbReference>
<dbReference type="Pfam" id="PF00117">
    <property type="entry name" value="GATase"/>
    <property type="match status" value="1"/>
</dbReference>
<dbReference type="SUPFAM" id="SSF52317">
    <property type="entry name" value="Class I glutamine amidotransferase-like"/>
    <property type="match status" value="1"/>
</dbReference>
<dbReference type="SUPFAM" id="SSF52540">
    <property type="entry name" value="P-loop containing nucleoside triphosphate hydrolases"/>
    <property type="match status" value="1"/>
</dbReference>
<dbReference type="PROSITE" id="PS51273">
    <property type="entry name" value="GATASE_TYPE_1"/>
    <property type="match status" value="1"/>
</dbReference>
<proteinExistence type="inferred from homology"/>
<organism>
    <name type="scientific">Geobacillus kaustophilus (strain HTA426)</name>
    <dbReference type="NCBI Taxonomy" id="235909"/>
    <lineage>
        <taxon>Bacteria</taxon>
        <taxon>Bacillati</taxon>
        <taxon>Bacillota</taxon>
        <taxon>Bacilli</taxon>
        <taxon>Bacillales</taxon>
        <taxon>Anoxybacillaceae</taxon>
        <taxon>Geobacillus</taxon>
        <taxon>Geobacillus thermoleovorans group</taxon>
    </lineage>
</organism>
<gene>
    <name evidence="1" type="primary">pyrG</name>
    <name type="ordered locus">GK3389</name>
</gene>